<feature type="chain" id="PRO_0000365636" description="Serine/threonine-protein phosphatase PP1-gamma catalytic subunit">
    <location>
        <begin position="1"/>
        <end position="323"/>
    </location>
</feature>
<feature type="region of interest" description="Disordered" evidence="6">
    <location>
        <begin position="300"/>
        <end position="323"/>
    </location>
</feature>
<feature type="active site" description="Proton donor" evidence="2">
    <location>
        <position position="125"/>
    </location>
</feature>
<feature type="binding site" evidence="1">
    <location>
        <position position="64"/>
    </location>
    <ligand>
        <name>Mn(2+)</name>
        <dbReference type="ChEBI" id="CHEBI:29035"/>
        <label>1</label>
    </ligand>
</feature>
<feature type="binding site" evidence="1">
    <location>
        <position position="66"/>
    </location>
    <ligand>
        <name>Mn(2+)</name>
        <dbReference type="ChEBI" id="CHEBI:29035"/>
        <label>1</label>
    </ligand>
</feature>
<feature type="binding site" evidence="1">
    <location>
        <position position="92"/>
    </location>
    <ligand>
        <name>Mn(2+)</name>
        <dbReference type="ChEBI" id="CHEBI:29035"/>
        <label>1</label>
    </ligand>
</feature>
<feature type="binding site" evidence="1">
    <location>
        <position position="92"/>
    </location>
    <ligand>
        <name>Mn(2+)</name>
        <dbReference type="ChEBI" id="CHEBI:29035"/>
        <label>2</label>
    </ligand>
</feature>
<feature type="binding site" evidence="1">
    <location>
        <position position="124"/>
    </location>
    <ligand>
        <name>Mn(2+)</name>
        <dbReference type="ChEBI" id="CHEBI:29035"/>
        <label>2</label>
    </ligand>
</feature>
<feature type="binding site" evidence="1">
    <location>
        <position position="173"/>
    </location>
    <ligand>
        <name>Mn(2+)</name>
        <dbReference type="ChEBI" id="CHEBI:29035"/>
        <label>2</label>
    </ligand>
</feature>
<feature type="binding site" evidence="1">
    <location>
        <position position="248"/>
    </location>
    <ligand>
        <name>Mn(2+)</name>
        <dbReference type="ChEBI" id="CHEBI:29035"/>
        <label>2</label>
    </ligand>
</feature>
<protein>
    <recommendedName>
        <fullName evidence="2">Serine/threonine-protein phosphatase PP1-gamma catalytic subunit</fullName>
        <shortName evidence="2">PP-1G</shortName>
        <ecNumber>3.1.3.16</ecNumber>
    </recommendedName>
</protein>
<sequence>MADVDKLNIDSIIQRLLEVRGSKPGKNVQLQENEIRGLCLKSREIFLSQPILLELEAPLKICGDIHGQYYDLLRLFEYGGFPPESNYLFLGDYVDRGKQSLETICLLLAYKIKYPENFFLLRGNHECASINRIYGFYDECKRRYNIKLWKTFTDCFNCLPIAAIVDEKIFCCHGGLSPDLQSMEQIRRIMRPTDVPDQGLLCDLLWSDPDKDVLGWGENDRGVSFTFGAEVVAKFLHKHDLDLICRAHQVVEDGYEFFAKRQLVTLFSAPNYCGEFDNAGAMMSVDETLMCSFQILKPAEKKKPNASRPVTPPRGMITKQAKK</sequence>
<organism>
    <name type="scientific">Xenopus tropicalis</name>
    <name type="common">Western clawed frog</name>
    <name type="synonym">Silurana tropicalis</name>
    <dbReference type="NCBI Taxonomy" id="8364"/>
    <lineage>
        <taxon>Eukaryota</taxon>
        <taxon>Metazoa</taxon>
        <taxon>Chordata</taxon>
        <taxon>Craniata</taxon>
        <taxon>Vertebrata</taxon>
        <taxon>Euteleostomi</taxon>
        <taxon>Amphibia</taxon>
        <taxon>Batrachia</taxon>
        <taxon>Anura</taxon>
        <taxon>Pipoidea</taxon>
        <taxon>Pipidae</taxon>
        <taxon>Xenopodinae</taxon>
        <taxon>Xenopus</taxon>
        <taxon>Silurana</taxon>
    </lineage>
</organism>
<name>PPIG_XENTR</name>
<reference evidence="8" key="1">
    <citation type="submission" date="2006-10" db="EMBL/GenBank/DDBJ databases">
        <authorList>
            <consortium name="Sanger Xenopus tropicalis EST/cDNA project"/>
        </authorList>
    </citation>
    <scope>NUCLEOTIDE SEQUENCE [LARGE SCALE MRNA]</scope>
    <source>
        <tissue evidence="8">Egg</tissue>
    </source>
</reference>
<reference evidence="8" key="2">
    <citation type="submission" date="2004-03" db="EMBL/GenBank/DDBJ databases">
        <authorList>
            <consortium name="NIH - Xenopus Gene Collection (XGC) project"/>
        </authorList>
    </citation>
    <scope>NUCLEOTIDE SEQUENCE [LARGE SCALE MRNA]</scope>
    <source>
        <tissue evidence="7">Embryo</tissue>
    </source>
</reference>
<keyword id="KW-0119">Carbohydrate metabolism</keyword>
<keyword id="KW-0131">Cell cycle</keyword>
<keyword id="KW-0132">Cell division</keyword>
<keyword id="KW-0137">Centromere</keyword>
<keyword id="KW-0158">Chromosome</keyword>
<keyword id="KW-0963">Cytoplasm</keyword>
<keyword id="KW-0206">Cytoskeleton</keyword>
<keyword id="KW-0321">Glycogen metabolism</keyword>
<keyword id="KW-0378">Hydrolase</keyword>
<keyword id="KW-0995">Kinetochore</keyword>
<keyword id="KW-0464">Manganese</keyword>
<keyword id="KW-0479">Metal-binding</keyword>
<keyword id="KW-0496">Mitochondrion</keyword>
<keyword id="KW-0498">Mitosis</keyword>
<keyword id="KW-0539">Nucleus</keyword>
<keyword id="KW-0904">Protein phosphatase</keyword>
<keyword id="KW-1185">Reference proteome</keyword>
<proteinExistence type="evidence at transcript level"/>
<dbReference type="EC" id="3.1.3.16"/>
<dbReference type="EMBL" id="CR761289">
    <property type="protein sequence ID" value="CAJ81429.1"/>
    <property type="molecule type" value="mRNA"/>
</dbReference>
<dbReference type="EMBL" id="BC067911">
    <property type="protein sequence ID" value="AAH67911.1"/>
    <property type="molecule type" value="mRNA"/>
</dbReference>
<dbReference type="RefSeq" id="NP_998835.1">
    <property type="nucleotide sequence ID" value="NM_213670.2"/>
</dbReference>
<dbReference type="SMR" id="Q6NVU2"/>
<dbReference type="FunCoup" id="Q6NVU2">
    <property type="interactions" value="3580"/>
</dbReference>
<dbReference type="STRING" id="8364.ENSXETP00000037289"/>
<dbReference type="PaxDb" id="8364-ENSXETP00000052896"/>
<dbReference type="DNASU" id="407879"/>
<dbReference type="GeneID" id="407879"/>
<dbReference type="KEGG" id="xtr:407879"/>
<dbReference type="AGR" id="Xenbase:XB-GENE-967934"/>
<dbReference type="CTD" id="5501"/>
<dbReference type="Xenbase" id="XB-GENE-967934">
    <property type="gene designation" value="ppp1cc"/>
</dbReference>
<dbReference type="eggNOG" id="KOG0374">
    <property type="taxonomic scope" value="Eukaryota"/>
</dbReference>
<dbReference type="HOGENOM" id="CLU_004962_0_0_1"/>
<dbReference type="InParanoid" id="Q6NVU2"/>
<dbReference type="OMA" id="EEHEIRY"/>
<dbReference type="OrthoDB" id="1930084at2759"/>
<dbReference type="PhylomeDB" id="Q6NVU2"/>
<dbReference type="TreeFam" id="TF354243"/>
<dbReference type="Reactome" id="R-XTR-141444">
    <property type="pathway name" value="Amplification of signal from unattached kinetochores via a MAD2 inhibitory signal"/>
</dbReference>
<dbReference type="Reactome" id="R-XTR-2467813">
    <property type="pathway name" value="Separation of Sister Chromatids"/>
</dbReference>
<dbReference type="Reactome" id="R-XTR-2500257">
    <property type="pathway name" value="Resolution of Sister Chromatid Cohesion"/>
</dbReference>
<dbReference type="Reactome" id="R-XTR-5663220">
    <property type="pathway name" value="RHO GTPases Activate Formins"/>
</dbReference>
<dbReference type="Reactome" id="R-XTR-68877">
    <property type="pathway name" value="Mitotic Prometaphase"/>
</dbReference>
<dbReference type="Reactome" id="R-XTR-9648025">
    <property type="pathway name" value="EML4 and NUDC in mitotic spindle formation"/>
</dbReference>
<dbReference type="Proteomes" id="UP000008143">
    <property type="component" value="Chromosome 1"/>
</dbReference>
<dbReference type="Bgee" id="ENSXETG00000024480">
    <property type="expression patterns" value="Expressed in egg cell and 16 other cell types or tissues"/>
</dbReference>
<dbReference type="GO" id="GO:0032154">
    <property type="term" value="C:cleavage furrow"/>
    <property type="evidence" value="ECO:0007669"/>
    <property type="project" value="UniProtKB-SubCell"/>
</dbReference>
<dbReference type="GO" id="GO:0000776">
    <property type="term" value="C:kinetochore"/>
    <property type="evidence" value="ECO:0007669"/>
    <property type="project" value="UniProtKB-KW"/>
</dbReference>
<dbReference type="GO" id="GO:0005815">
    <property type="term" value="C:microtubule organizing center"/>
    <property type="evidence" value="ECO:0007669"/>
    <property type="project" value="UniProtKB-SubCell"/>
</dbReference>
<dbReference type="GO" id="GO:0030496">
    <property type="term" value="C:midbody"/>
    <property type="evidence" value="ECO:0007669"/>
    <property type="project" value="UniProtKB-SubCell"/>
</dbReference>
<dbReference type="GO" id="GO:0005739">
    <property type="term" value="C:mitochondrion"/>
    <property type="evidence" value="ECO:0000250"/>
    <property type="project" value="UniProtKB"/>
</dbReference>
<dbReference type="GO" id="GO:0016607">
    <property type="term" value="C:nuclear speck"/>
    <property type="evidence" value="ECO:0007669"/>
    <property type="project" value="UniProtKB-SubCell"/>
</dbReference>
<dbReference type="GO" id="GO:0005730">
    <property type="term" value="C:nucleolus"/>
    <property type="evidence" value="ECO:0007669"/>
    <property type="project" value="UniProtKB-SubCell"/>
</dbReference>
<dbReference type="GO" id="GO:0046872">
    <property type="term" value="F:metal ion binding"/>
    <property type="evidence" value="ECO:0007669"/>
    <property type="project" value="UniProtKB-KW"/>
</dbReference>
<dbReference type="GO" id="GO:0004722">
    <property type="term" value="F:protein serine/threonine phosphatase activity"/>
    <property type="evidence" value="ECO:0000250"/>
    <property type="project" value="UniProtKB"/>
</dbReference>
<dbReference type="GO" id="GO:0051301">
    <property type="term" value="P:cell division"/>
    <property type="evidence" value="ECO:0007669"/>
    <property type="project" value="UniProtKB-KW"/>
</dbReference>
<dbReference type="GO" id="GO:0005977">
    <property type="term" value="P:glycogen metabolic process"/>
    <property type="evidence" value="ECO:0007669"/>
    <property type="project" value="UniProtKB-KW"/>
</dbReference>
<dbReference type="GO" id="GO:0007084">
    <property type="term" value="P:mitotic nuclear membrane reassembly"/>
    <property type="evidence" value="ECO:0000250"/>
    <property type="project" value="UniProtKB"/>
</dbReference>
<dbReference type="GO" id="GO:0006470">
    <property type="term" value="P:protein dephosphorylation"/>
    <property type="evidence" value="ECO:0000250"/>
    <property type="project" value="UniProtKB"/>
</dbReference>
<dbReference type="CDD" id="cd07414">
    <property type="entry name" value="MPP_PP1_PPKL"/>
    <property type="match status" value="1"/>
</dbReference>
<dbReference type="FunFam" id="3.60.21.10:FF:000004">
    <property type="entry name" value="Serine/threonine-protein phosphatase"/>
    <property type="match status" value="1"/>
</dbReference>
<dbReference type="Gene3D" id="3.60.21.10">
    <property type="match status" value="1"/>
</dbReference>
<dbReference type="InterPro" id="IPR004843">
    <property type="entry name" value="Calcineurin-like_PHP_ApaH"/>
</dbReference>
<dbReference type="InterPro" id="IPR029052">
    <property type="entry name" value="Metallo-depent_PP-like"/>
</dbReference>
<dbReference type="InterPro" id="IPR050341">
    <property type="entry name" value="PP1_catalytic_subunit"/>
</dbReference>
<dbReference type="InterPro" id="IPR006186">
    <property type="entry name" value="Ser/Thr-sp_prot-phosphatase"/>
</dbReference>
<dbReference type="InterPro" id="IPR031675">
    <property type="entry name" value="STPPase_N"/>
</dbReference>
<dbReference type="PANTHER" id="PTHR11668">
    <property type="entry name" value="SERINE/THREONINE PROTEIN PHOSPHATASE"/>
    <property type="match status" value="1"/>
</dbReference>
<dbReference type="PANTHER" id="PTHR11668:SF300">
    <property type="entry name" value="SERINE_THREONINE-PROTEIN PHOSPHATASE"/>
    <property type="match status" value="1"/>
</dbReference>
<dbReference type="Pfam" id="PF00149">
    <property type="entry name" value="Metallophos"/>
    <property type="match status" value="1"/>
</dbReference>
<dbReference type="Pfam" id="PF16891">
    <property type="entry name" value="STPPase_N"/>
    <property type="match status" value="1"/>
</dbReference>
<dbReference type="PRINTS" id="PR00114">
    <property type="entry name" value="STPHPHTASE"/>
</dbReference>
<dbReference type="SMART" id="SM00156">
    <property type="entry name" value="PP2Ac"/>
    <property type="match status" value="1"/>
</dbReference>
<dbReference type="SUPFAM" id="SSF56300">
    <property type="entry name" value="Metallo-dependent phosphatases"/>
    <property type="match status" value="1"/>
</dbReference>
<dbReference type="PROSITE" id="PS00125">
    <property type="entry name" value="SER_THR_PHOSPHATASE"/>
    <property type="match status" value="1"/>
</dbReference>
<comment type="function">
    <text evidence="1">Protein phosphatase 1 (PP1) is essential for cell division, and participates in the regulation of glycogen metabolism, muscle contractility and protein synthesis. Promotes nuclear envelope reassembly by targeting nuclear membrane vesicles to chromatin at the end of mitosis. Acts by dephosphorylating membrane proteins such as lamin B receptor (lbr) to regulate the binding of membrane proteins to chromatin (By similarity).</text>
</comment>
<comment type="catalytic activity">
    <reaction>
        <text>O-phospho-L-seryl-[protein] + H2O = L-seryl-[protein] + phosphate</text>
        <dbReference type="Rhea" id="RHEA:20629"/>
        <dbReference type="Rhea" id="RHEA-COMP:9863"/>
        <dbReference type="Rhea" id="RHEA-COMP:11604"/>
        <dbReference type="ChEBI" id="CHEBI:15377"/>
        <dbReference type="ChEBI" id="CHEBI:29999"/>
        <dbReference type="ChEBI" id="CHEBI:43474"/>
        <dbReference type="ChEBI" id="CHEBI:83421"/>
        <dbReference type="EC" id="3.1.3.16"/>
    </reaction>
</comment>
<comment type="catalytic activity">
    <reaction>
        <text>O-phospho-L-threonyl-[protein] + H2O = L-threonyl-[protein] + phosphate</text>
        <dbReference type="Rhea" id="RHEA:47004"/>
        <dbReference type="Rhea" id="RHEA-COMP:11060"/>
        <dbReference type="Rhea" id="RHEA-COMP:11605"/>
        <dbReference type="ChEBI" id="CHEBI:15377"/>
        <dbReference type="ChEBI" id="CHEBI:30013"/>
        <dbReference type="ChEBI" id="CHEBI:43474"/>
        <dbReference type="ChEBI" id="CHEBI:61977"/>
        <dbReference type="EC" id="3.1.3.16"/>
    </reaction>
</comment>
<comment type="cofactor">
    <cofactor evidence="1">
        <name>Mn(2+)</name>
        <dbReference type="ChEBI" id="CHEBI:29035"/>
    </cofactor>
    <text evidence="1">Binds 2 manganese ions per subunit.</text>
</comment>
<comment type="subunit">
    <text evidence="4">PP1 comprises a catalytic subunit, ppp1c1, ppp1cb or ppp1cc, which is folded into its native form by inhibitor 2 and glycogen synthetase kinase 3, and then is complexed to one or several targeting or regulatory subunits.</text>
</comment>
<comment type="subcellular location">
    <subcellularLocation>
        <location evidence="3">Cytoplasm</location>
    </subcellularLocation>
    <subcellularLocation>
        <location evidence="1">Nucleus</location>
    </subcellularLocation>
    <subcellularLocation>
        <location evidence="1">Cleavage furrow</location>
    </subcellularLocation>
    <subcellularLocation>
        <location evidence="1">Nucleus</location>
        <location evidence="1">Nucleolus</location>
    </subcellularLocation>
    <subcellularLocation>
        <location evidence="1">Nucleus</location>
        <location evidence="1">Nucleoplasm</location>
    </subcellularLocation>
    <subcellularLocation>
        <location evidence="1">Chromosome</location>
        <location evidence="1">Centromere</location>
        <location evidence="1">Kinetochore</location>
    </subcellularLocation>
    <subcellularLocation>
        <location evidence="1">Nucleus speckle</location>
    </subcellularLocation>
    <subcellularLocation>
        <location evidence="1">Midbody</location>
    </subcellularLocation>
    <subcellularLocation>
        <location evidence="1">Mitochondrion</location>
    </subcellularLocation>
    <subcellularLocation>
        <location evidence="2">Cytoplasm</location>
        <location evidence="2">Cytoskeleton</location>
        <location evidence="2">Microtubule organizing center</location>
    </subcellularLocation>
</comment>
<comment type="similarity">
    <text evidence="5">Belongs to the PPP phosphatase family. PP-1 subfamily.</text>
</comment>
<gene>
    <name evidence="7" type="primary">ppp1cc</name>
    <name type="ORF">TEgg061c20.1</name>
</gene>
<evidence type="ECO:0000250" key="1"/>
<evidence type="ECO:0000250" key="2">
    <source>
        <dbReference type="UniProtKB" id="P36873"/>
    </source>
</evidence>
<evidence type="ECO:0000250" key="3">
    <source>
        <dbReference type="UniProtKB" id="P36874"/>
    </source>
</evidence>
<evidence type="ECO:0000250" key="4">
    <source>
        <dbReference type="UniProtKB" id="P63088"/>
    </source>
</evidence>
<evidence type="ECO:0000255" key="5"/>
<evidence type="ECO:0000256" key="6">
    <source>
        <dbReference type="SAM" id="MobiDB-lite"/>
    </source>
</evidence>
<evidence type="ECO:0000312" key="7">
    <source>
        <dbReference type="EMBL" id="AAH67911.1"/>
    </source>
</evidence>
<evidence type="ECO:0000312" key="8">
    <source>
        <dbReference type="EMBL" id="CAJ81429.1"/>
    </source>
</evidence>
<accession>Q6NVU2</accession>